<feature type="chain" id="PRO_1000194908" description="Ribosome-recycling factor">
    <location>
        <begin position="1"/>
        <end position="184"/>
    </location>
</feature>
<name>RRF_CALS8</name>
<dbReference type="EMBL" id="CP000679">
    <property type="protein sequence ID" value="ABP67934.1"/>
    <property type="molecule type" value="Genomic_DNA"/>
</dbReference>
<dbReference type="RefSeq" id="WP_011917860.1">
    <property type="nucleotide sequence ID" value="NC_009437.1"/>
</dbReference>
<dbReference type="SMR" id="A4XLZ9"/>
<dbReference type="STRING" id="351627.Csac_2356"/>
<dbReference type="KEGG" id="csc:Csac_2356"/>
<dbReference type="eggNOG" id="COG0233">
    <property type="taxonomic scope" value="Bacteria"/>
</dbReference>
<dbReference type="HOGENOM" id="CLU_073981_2_0_9"/>
<dbReference type="OrthoDB" id="9804006at2"/>
<dbReference type="Proteomes" id="UP000000256">
    <property type="component" value="Chromosome"/>
</dbReference>
<dbReference type="GO" id="GO:0005737">
    <property type="term" value="C:cytoplasm"/>
    <property type="evidence" value="ECO:0007669"/>
    <property type="project" value="UniProtKB-SubCell"/>
</dbReference>
<dbReference type="GO" id="GO:0043023">
    <property type="term" value="F:ribosomal large subunit binding"/>
    <property type="evidence" value="ECO:0007669"/>
    <property type="project" value="TreeGrafter"/>
</dbReference>
<dbReference type="GO" id="GO:0006415">
    <property type="term" value="P:translational termination"/>
    <property type="evidence" value="ECO:0007669"/>
    <property type="project" value="UniProtKB-UniRule"/>
</dbReference>
<dbReference type="CDD" id="cd00520">
    <property type="entry name" value="RRF"/>
    <property type="match status" value="1"/>
</dbReference>
<dbReference type="FunFam" id="1.10.132.20:FF:000001">
    <property type="entry name" value="Ribosome-recycling factor"/>
    <property type="match status" value="1"/>
</dbReference>
<dbReference type="FunFam" id="3.30.1360.40:FF:000001">
    <property type="entry name" value="Ribosome-recycling factor"/>
    <property type="match status" value="1"/>
</dbReference>
<dbReference type="Gene3D" id="3.30.1360.40">
    <property type="match status" value="1"/>
</dbReference>
<dbReference type="Gene3D" id="1.10.132.20">
    <property type="entry name" value="Ribosome-recycling factor"/>
    <property type="match status" value="1"/>
</dbReference>
<dbReference type="HAMAP" id="MF_00040">
    <property type="entry name" value="RRF"/>
    <property type="match status" value="1"/>
</dbReference>
<dbReference type="InterPro" id="IPR002661">
    <property type="entry name" value="Ribosome_recyc_fac"/>
</dbReference>
<dbReference type="InterPro" id="IPR023584">
    <property type="entry name" value="Ribosome_recyc_fac_dom"/>
</dbReference>
<dbReference type="InterPro" id="IPR036191">
    <property type="entry name" value="RRF_sf"/>
</dbReference>
<dbReference type="NCBIfam" id="TIGR00496">
    <property type="entry name" value="frr"/>
    <property type="match status" value="1"/>
</dbReference>
<dbReference type="PANTHER" id="PTHR20982:SF3">
    <property type="entry name" value="MITOCHONDRIAL RIBOSOME RECYCLING FACTOR PSEUDO 1"/>
    <property type="match status" value="1"/>
</dbReference>
<dbReference type="PANTHER" id="PTHR20982">
    <property type="entry name" value="RIBOSOME RECYCLING FACTOR"/>
    <property type="match status" value="1"/>
</dbReference>
<dbReference type="Pfam" id="PF01765">
    <property type="entry name" value="RRF"/>
    <property type="match status" value="1"/>
</dbReference>
<dbReference type="SUPFAM" id="SSF55194">
    <property type="entry name" value="Ribosome recycling factor, RRF"/>
    <property type="match status" value="1"/>
</dbReference>
<evidence type="ECO:0000255" key="1">
    <source>
        <dbReference type="HAMAP-Rule" id="MF_00040"/>
    </source>
</evidence>
<gene>
    <name evidence="1" type="primary">frr</name>
    <name type="ordered locus">Csac_2356</name>
</gene>
<keyword id="KW-0963">Cytoplasm</keyword>
<keyword id="KW-0648">Protein biosynthesis</keyword>
<sequence>MPEPIQIAEEKMKKAIETLKEEFATVRAGRANPHILDKVMVDYYGVPTPIPQLASITVPEARMIVIQPWEARMLKEIEKAIQKADLGVNPANDGKVIRLIFPELTEERRKELVKQVKKMAEDAKVAIRNIRREAIDEYKKMKKNNEITEDDLKDAEEDVQKLHDKYIEQIEKLLSAKEKEIMEV</sequence>
<reference key="1">
    <citation type="submission" date="2007-04" db="EMBL/GenBank/DDBJ databases">
        <title>Genome sequence of the thermophilic hydrogen-producing bacterium Caldicellulosiruptor saccharolyticus DSM 8903.</title>
        <authorList>
            <person name="Copeland A."/>
            <person name="Lucas S."/>
            <person name="Lapidus A."/>
            <person name="Barry K."/>
            <person name="Detter J.C."/>
            <person name="Glavina del Rio T."/>
            <person name="Hammon N."/>
            <person name="Israni S."/>
            <person name="Dalin E."/>
            <person name="Tice H."/>
            <person name="Pitluck S."/>
            <person name="Kiss H."/>
            <person name="Brettin T."/>
            <person name="Bruce D."/>
            <person name="Han C."/>
            <person name="Schmutz J."/>
            <person name="Larimer F."/>
            <person name="Land M."/>
            <person name="Hauser L."/>
            <person name="Kyrpides N."/>
            <person name="Lykidis A."/>
            <person name="van de Werken H.J.G."/>
            <person name="Verhaart M.R.A."/>
            <person name="VanFossen A.L."/>
            <person name="Lewis D.L."/>
            <person name="Nichols J.D."/>
            <person name="Goorissen H.P."/>
            <person name="van Niel E.W.J."/>
            <person name="Stams F.J.M."/>
            <person name="Willquist K.U."/>
            <person name="Ward D.E."/>
            <person name="van der Oost J."/>
            <person name="Kelly R.M."/>
            <person name="Kengen S.M.W."/>
            <person name="Richardson P."/>
        </authorList>
    </citation>
    <scope>NUCLEOTIDE SEQUENCE [LARGE SCALE GENOMIC DNA]</scope>
    <source>
        <strain>ATCC 43494 / DSM 8903 / Tp8T 6331</strain>
    </source>
</reference>
<organism>
    <name type="scientific">Caldicellulosiruptor saccharolyticus (strain ATCC 43494 / DSM 8903 / Tp8T 6331)</name>
    <dbReference type="NCBI Taxonomy" id="351627"/>
    <lineage>
        <taxon>Bacteria</taxon>
        <taxon>Bacillati</taxon>
        <taxon>Bacillota</taxon>
        <taxon>Bacillota incertae sedis</taxon>
        <taxon>Caldicellulosiruptorales</taxon>
        <taxon>Caldicellulosiruptoraceae</taxon>
        <taxon>Caldicellulosiruptor</taxon>
    </lineage>
</organism>
<comment type="function">
    <text evidence="1">Responsible for the release of ribosomes from messenger RNA at the termination of protein biosynthesis. May increase the efficiency of translation by recycling ribosomes from one round of translation to another.</text>
</comment>
<comment type="subcellular location">
    <subcellularLocation>
        <location evidence="1">Cytoplasm</location>
    </subcellularLocation>
</comment>
<comment type="similarity">
    <text evidence="1">Belongs to the RRF family.</text>
</comment>
<accession>A4XLZ9</accession>
<proteinExistence type="inferred from homology"/>
<protein>
    <recommendedName>
        <fullName evidence="1">Ribosome-recycling factor</fullName>
        <shortName evidence="1">RRF</shortName>
    </recommendedName>
    <alternativeName>
        <fullName evidence="1">Ribosome-releasing factor</fullName>
    </alternativeName>
</protein>